<organismHost>
    <name type="scientific">Homo sapiens</name>
    <name type="common">Human</name>
    <dbReference type="NCBI Taxonomy" id="9606"/>
</organismHost>
<dbReference type="EMBL" id="M73258">
    <property type="status" value="NOT_ANNOTATED_CDS"/>
    <property type="molecule type" value="Genomic_DNA"/>
</dbReference>
<dbReference type="PIR" id="C40509">
    <property type="entry name" value="W6WLPR"/>
</dbReference>
<dbReference type="SMR" id="P27962"/>
<dbReference type="IntAct" id="P27962">
    <property type="interactions" value="1"/>
</dbReference>
<dbReference type="MINT" id="P27962"/>
<dbReference type="GO" id="GO:0030430">
    <property type="term" value="C:host cell cytoplasm"/>
    <property type="evidence" value="ECO:0007669"/>
    <property type="project" value="UniProtKB-SubCell"/>
</dbReference>
<dbReference type="GO" id="GO:0042025">
    <property type="term" value="C:host cell nucleus"/>
    <property type="evidence" value="ECO:0007669"/>
    <property type="project" value="UniProtKB-SubCell"/>
</dbReference>
<dbReference type="GO" id="GO:0003677">
    <property type="term" value="F:DNA binding"/>
    <property type="evidence" value="ECO:0007669"/>
    <property type="project" value="UniProtKB-UniRule"/>
</dbReference>
<dbReference type="GO" id="GO:0008270">
    <property type="term" value="F:zinc ion binding"/>
    <property type="evidence" value="ECO:0007669"/>
    <property type="project" value="UniProtKB-KW"/>
</dbReference>
<dbReference type="GO" id="GO:0006351">
    <property type="term" value="P:DNA-templated transcription"/>
    <property type="evidence" value="ECO:0007669"/>
    <property type="project" value="UniProtKB-UniRule"/>
</dbReference>
<dbReference type="GO" id="GO:0006355">
    <property type="term" value="P:regulation of DNA-templated transcription"/>
    <property type="evidence" value="ECO:0007669"/>
    <property type="project" value="UniProtKB-UniRule"/>
</dbReference>
<dbReference type="GO" id="GO:0052150">
    <property type="term" value="P:symbiont-mediated perturbation of host apoptosis"/>
    <property type="evidence" value="ECO:0007669"/>
    <property type="project" value="UniProtKB-KW"/>
</dbReference>
<dbReference type="GO" id="GO:0039648">
    <property type="term" value="P:symbiont-mediated perturbation of host ubiquitin-like protein modification"/>
    <property type="evidence" value="ECO:0007669"/>
    <property type="project" value="UniProtKB-UniRule"/>
</dbReference>
<dbReference type="GO" id="GO:0052170">
    <property type="term" value="P:symbiont-mediated suppression of host innate immune response"/>
    <property type="evidence" value="ECO:0007669"/>
    <property type="project" value="UniProtKB-KW"/>
</dbReference>
<dbReference type="GO" id="GO:0039502">
    <property type="term" value="P:symbiont-mediated suppression of host type I interferon-mediated signaling pathway"/>
    <property type="evidence" value="ECO:0007669"/>
    <property type="project" value="UniProtKB-UniRule"/>
</dbReference>
<dbReference type="FunFam" id="3.30.240.40:FF:000001">
    <property type="entry name" value="Protein E6"/>
    <property type="match status" value="1"/>
</dbReference>
<dbReference type="FunFam" id="3.30.240.40:FF:000002">
    <property type="entry name" value="Protein E6"/>
    <property type="match status" value="1"/>
</dbReference>
<dbReference type="Gene3D" id="3.30.240.40">
    <property type="entry name" value="E6 early regulatory protein"/>
    <property type="match status" value="2"/>
</dbReference>
<dbReference type="HAMAP" id="MF_04006">
    <property type="entry name" value="HPV_E6"/>
    <property type="match status" value="1"/>
</dbReference>
<dbReference type="InterPro" id="IPR001334">
    <property type="entry name" value="E6"/>
</dbReference>
<dbReference type="InterPro" id="IPR038575">
    <property type="entry name" value="E6_sf"/>
</dbReference>
<dbReference type="Pfam" id="PF00518">
    <property type="entry name" value="E6"/>
    <property type="match status" value="1"/>
</dbReference>
<dbReference type="SUPFAM" id="SSF161229">
    <property type="entry name" value="E6 C-terminal domain-like"/>
    <property type="match status" value="2"/>
</dbReference>
<accession>P27962</accession>
<comment type="function">
    <text evidence="1">Plays a major role in the induction and maintenance of cellular transformation. E6 associates with host UBE3A/E6-AP ubiquitin-protein ligase and modulates its activity. Protects host keratinocytes from apoptosis by mediating the degradation of host BAK1. May also inhibit host immune response.</text>
</comment>
<comment type="subunit">
    <text evidence="1">Forms homodimers. Interacts with ubiquitin-protein ligase UBE3A/E6-AP; this interaction stimulates UBE3A ubiquitin activity. Interacts with host BAK1.</text>
</comment>
<comment type="subcellular location">
    <subcellularLocation>
        <location evidence="1">Host cytoplasm</location>
    </subcellularLocation>
    <subcellularLocation>
        <location evidence="1">Host nucleus</location>
    </subcellularLocation>
</comment>
<comment type="similarity">
    <text evidence="1 2">Belongs to the papillomaviridae E6 protein family.</text>
</comment>
<keyword id="KW-0010">Activator</keyword>
<keyword id="KW-0238">DNA-binding</keyword>
<keyword id="KW-0244">Early protein</keyword>
<keyword id="KW-1035">Host cytoplasm</keyword>
<keyword id="KW-1048">Host nucleus</keyword>
<keyword id="KW-0945">Host-virus interaction</keyword>
<keyword id="KW-1090">Inhibition of host innate immune response by virus</keyword>
<keyword id="KW-0479">Metal-binding</keyword>
<keyword id="KW-1119">Modulation of host cell apoptosis by virus</keyword>
<keyword id="KW-0804">Transcription</keyword>
<keyword id="KW-0805">Transcription regulation</keyword>
<keyword id="KW-0899">Viral immunoevasion</keyword>
<keyword id="KW-0862">Zinc</keyword>
<keyword id="KW-0863">Zinc-finger</keyword>
<name>VE6_HPVME</name>
<feature type="chain" id="PRO_0000133318" description="Protein E6">
    <location>
        <begin position="1"/>
        <end position="158"/>
    </location>
</feature>
<feature type="zinc finger region" evidence="1">
    <location>
        <begin position="32"/>
        <end position="68"/>
    </location>
</feature>
<feature type="zinc finger region" evidence="1">
    <location>
        <begin position="105"/>
        <end position="141"/>
    </location>
</feature>
<feature type="short sequence motif" description="PDZ-binding domain" evidence="1">
    <location>
        <begin position="156"/>
        <end position="158"/>
    </location>
</feature>
<gene>
    <name evidence="1" type="primary">E6</name>
</gene>
<organism>
    <name type="scientific">Human papillomavirus type ME180</name>
    <dbReference type="NCBI Taxonomy" id="10602"/>
    <lineage>
        <taxon>Viruses</taxon>
        <taxon>Monodnaviria</taxon>
        <taxon>Shotokuvirae</taxon>
        <taxon>Cossaviricota</taxon>
        <taxon>Papovaviricetes</taxon>
        <taxon>Zurhausenvirales</taxon>
        <taxon>Papillomaviridae</taxon>
    </lineage>
</organism>
<protein>
    <recommendedName>
        <fullName evidence="1">Protein E6</fullName>
    </recommendedName>
</protein>
<proteinExistence type="inferred from homology"/>
<sequence>MALFHNPEERPYKLPDLCRTLDTTLHDVTIDCVYCRRQLQRTEVYEFAFGDLNVVYRDGVPLAACQSCIKFYAKIRELRYYSESVYATTLETITNTKLYDLSIRCMCCLKPLSPAEKLRHLNSKRRFHKIAGNFTGQCRHCWTSKREDRRRTRQETQV</sequence>
<evidence type="ECO:0000255" key="1">
    <source>
        <dbReference type="HAMAP-Rule" id="MF_04006"/>
    </source>
</evidence>
<evidence type="ECO:0000305" key="2"/>
<reference key="1">
    <citation type="journal article" date="1991" name="J. Virol.">
        <title>Characterization of a novel human papillomavirus DNA in the cervical carcinoma cell line ME180.</title>
        <authorList>
            <person name="Reuter S."/>
            <person name="Delius H."/>
            <person name="Kahn T."/>
            <person name="Hofmann B."/>
            <person name="zur Hausen H."/>
            <person name="Schwarz E."/>
        </authorList>
    </citation>
    <scope>NUCLEOTIDE SEQUENCE [GENOMIC DNA]</scope>
</reference>